<comment type="function">
    <text evidence="1">Catalyzes the GTP-dependent successive addition of two or more gamma-linked L-glutamates to the L-lactyl phosphodiester of 7,8-didemethyl-8-hydroxy-5-deazariboflavin (F420-0) to form coenzyme F420-0-glutamyl-glutamate (F420-2) or polyglutamated F420 derivatives.</text>
</comment>
<comment type="catalytic activity">
    <reaction evidence="1">
        <text>oxidized coenzyme F420-0 + GTP + L-glutamate = oxidized coenzyme F420-1 + GDP + phosphate + H(+)</text>
        <dbReference type="Rhea" id="RHEA:30555"/>
        <dbReference type="ChEBI" id="CHEBI:15378"/>
        <dbReference type="ChEBI" id="CHEBI:29985"/>
        <dbReference type="ChEBI" id="CHEBI:37565"/>
        <dbReference type="ChEBI" id="CHEBI:43474"/>
        <dbReference type="ChEBI" id="CHEBI:58189"/>
        <dbReference type="ChEBI" id="CHEBI:59907"/>
        <dbReference type="ChEBI" id="CHEBI:59920"/>
        <dbReference type="EC" id="6.3.2.31"/>
    </reaction>
</comment>
<comment type="catalytic activity">
    <reaction evidence="1">
        <text>oxidized coenzyme F420-1 + GTP + L-glutamate = oxidized coenzyme F420-2 + GDP + phosphate + H(+)</text>
        <dbReference type="Rhea" id="RHEA:30523"/>
        <dbReference type="ChEBI" id="CHEBI:15378"/>
        <dbReference type="ChEBI" id="CHEBI:29985"/>
        <dbReference type="ChEBI" id="CHEBI:37565"/>
        <dbReference type="ChEBI" id="CHEBI:43474"/>
        <dbReference type="ChEBI" id="CHEBI:57922"/>
        <dbReference type="ChEBI" id="CHEBI:58189"/>
        <dbReference type="ChEBI" id="CHEBI:59920"/>
        <dbReference type="EC" id="6.3.2.34"/>
    </reaction>
</comment>
<comment type="cofactor">
    <cofactor evidence="1">
        <name>Mg(2+)</name>
        <dbReference type="ChEBI" id="CHEBI:18420"/>
    </cofactor>
    <cofactor evidence="1">
        <name>Mn(2+)</name>
        <dbReference type="ChEBI" id="CHEBI:29035"/>
    </cofactor>
    <text evidence="1">Binds 2 divalent metal cations per subunit. The ions could be magnesium and/or manganese.</text>
</comment>
<comment type="cofactor">
    <cofactor evidence="1">
        <name>K(+)</name>
        <dbReference type="ChEBI" id="CHEBI:29103"/>
    </cofactor>
    <text evidence="1">Monovalent cation. The ion could be potassium.</text>
</comment>
<comment type="pathway">
    <text evidence="1">Cofactor biosynthesis; coenzyme F420 biosynthesis.</text>
</comment>
<comment type="subunit">
    <text evidence="1">Homodimer.</text>
</comment>
<comment type="similarity">
    <text evidence="1">Belongs to the CofE family.</text>
</comment>
<dbReference type="EC" id="6.3.2.31" evidence="1"/>
<dbReference type="EC" id="6.3.2.34" evidence="1"/>
<dbReference type="EMBL" id="CP000745">
    <property type="protein sequence ID" value="ABR65254.1"/>
    <property type="molecule type" value="Genomic_DNA"/>
</dbReference>
<dbReference type="SMR" id="A6VFM8"/>
<dbReference type="STRING" id="426368.MmarC7_0184"/>
<dbReference type="KEGG" id="mmz:MmarC7_0184"/>
<dbReference type="eggNOG" id="arCOG02714">
    <property type="taxonomic scope" value="Archaea"/>
</dbReference>
<dbReference type="HOGENOM" id="CLU_051152_1_1_2"/>
<dbReference type="OrthoDB" id="11383at2157"/>
<dbReference type="UniPathway" id="UPA00071"/>
<dbReference type="GO" id="GO:0052618">
    <property type="term" value="F:coenzyme F420-0:L-glutamate ligase activity"/>
    <property type="evidence" value="ECO:0007669"/>
    <property type="project" value="UniProtKB-UniRule"/>
</dbReference>
<dbReference type="GO" id="GO:0052619">
    <property type="term" value="F:coenzyme F420-1:gamma-L-glutamate ligase activity"/>
    <property type="evidence" value="ECO:0007669"/>
    <property type="project" value="UniProtKB-UniRule"/>
</dbReference>
<dbReference type="GO" id="GO:0005525">
    <property type="term" value="F:GTP binding"/>
    <property type="evidence" value="ECO:0007669"/>
    <property type="project" value="UniProtKB-KW"/>
</dbReference>
<dbReference type="GO" id="GO:0046872">
    <property type="term" value="F:metal ion binding"/>
    <property type="evidence" value="ECO:0007669"/>
    <property type="project" value="UniProtKB-KW"/>
</dbReference>
<dbReference type="GO" id="GO:0052645">
    <property type="term" value="P:F420-0 metabolic process"/>
    <property type="evidence" value="ECO:0007669"/>
    <property type="project" value="UniProtKB-UniRule"/>
</dbReference>
<dbReference type="Gene3D" id="3.30.1330.100">
    <property type="entry name" value="CofE-like"/>
    <property type="match status" value="1"/>
</dbReference>
<dbReference type="Gene3D" id="3.90.1660.10">
    <property type="entry name" value="CofE-like domain"/>
    <property type="match status" value="1"/>
</dbReference>
<dbReference type="HAMAP" id="MF_01258">
    <property type="entry name" value="F420_ligase_CofE"/>
    <property type="match status" value="1"/>
</dbReference>
<dbReference type="InterPro" id="IPR008225">
    <property type="entry name" value="F420-0_g-glutamyl_ligase"/>
</dbReference>
<dbReference type="InterPro" id="IPR002847">
    <property type="entry name" value="F420-0_gamma-glut_ligase-dom"/>
</dbReference>
<dbReference type="InterPro" id="IPR023659">
    <property type="entry name" value="F420_ligase_CofE_arc"/>
</dbReference>
<dbReference type="NCBIfam" id="TIGR01916">
    <property type="entry name" value="F420_cofE"/>
    <property type="match status" value="1"/>
</dbReference>
<dbReference type="NCBIfam" id="NF009809">
    <property type="entry name" value="PRK13293.1"/>
    <property type="match status" value="1"/>
</dbReference>
<dbReference type="PANTHER" id="PTHR47917">
    <property type="match status" value="1"/>
</dbReference>
<dbReference type="PANTHER" id="PTHR47917:SF1">
    <property type="entry name" value="COENZYME F420:L-GLUTAMATE LIGASE"/>
    <property type="match status" value="1"/>
</dbReference>
<dbReference type="Pfam" id="PF01996">
    <property type="entry name" value="F420_ligase"/>
    <property type="match status" value="1"/>
</dbReference>
<dbReference type="SUPFAM" id="SSF144010">
    <property type="entry name" value="CofE-like"/>
    <property type="match status" value="1"/>
</dbReference>
<proteinExistence type="inferred from homology"/>
<keyword id="KW-0342">GTP-binding</keyword>
<keyword id="KW-0436">Ligase</keyword>
<keyword id="KW-0460">Magnesium</keyword>
<keyword id="KW-0464">Manganese</keyword>
<keyword id="KW-0479">Metal-binding</keyword>
<keyword id="KW-0547">Nucleotide-binding</keyword>
<keyword id="KW-0630">Potassium</keyword>
<protein>
    <recommendedName>
        <fullName evidence="1">Coenzyme F420:L-glutamate ligase</fullName>
        <ecNumber evidence="1">6.3.2.31</ecNumber>
        <ecNumber evidence="1">6.3.2.34</ecNumber>
    </recommendedName>
    <alternativeName>
        <fullName evidence="1">Coenzyme F420-0:L-glutamate ligase</fullName>
    </alternativeName>
    <alternativeName>
        <fullName evidence="1">Coenzyme F420-1:gamma-L-glutamate ligase</fullName>
    </alternativeName>
</protein>
<organism>
    <name type="scientific">Methanococcus maripaludis (strain C7 / ATCC BAA-1331)</name>
    <dbReference type="NCBI Taxonomy" id="426368"/>
    <lineage>
        <taxon>Archaea</taxon>
        <taxon>Methanobacteriati</taxon>
        <taxon>Methanobacteriota</taxon>
        <taxon>Methanomada group</taxon>
        <taxon>Methanococci</taxon>
        <taxon>Methanococcales</taxon>
        <taxon>Methanococcaceae</taxon>
        <taxon>Methanococcus</taxon>
    </lineage>
</organism>
<accession>A6VFM8</accession>
<feature type="chain" id="PRO_1000067258" description="Coenzyme F420:L-glutamate ligase">
    <location>
        <begin position="1"/>
        <end position="248"/>
    </location>
</feature>
<feature type="binding site" evidence="1">
    <location>
        <begin position="15"/>
        <end position="18"/>
    </location>
    <ligand>
        <name>GTP</name>
        <dbReference type="ChEBI" id="CHEBI:37565"/>
    </ligand>
</feature>
<feature type="binding site" evidence="1">
    <location>
        <begin position="45"/>
        <end position="46"/>
    </location>
    <ligand>
        <name>GTP</name>
        <dbReference type="ChEBI" id="CHEBI:37565"/>
    </ligand>
</feature>
<feature type="binding site" evidence="1">
    <location>
        <position position="50"/>
    </location>
    <ligand>
        <name>GTP</name>
        <dbReference type="ChEBI" id="CHEBI:37565"/>
    </ligand>
</feature>
<feature type="binding site" evidence="1">
    <location>
        <position position="115"/>
    </location>
    <ligand>
        <name>a divalent metal cation</name>
        <dbReference type="ChEBI" id="CHEBI:60240"/>
        <label>1</label>
    </ligand>
</feature>
<feature type="binding site" evidence="1">
    <location>
        <position position="118"/>
    </location>
    <ligand>
        <name>GTP</name>
        <dbReference type="ChEBI" id="CHEBI:37565"/>
    </ligand>
</feature>
<feature type="binding site" evidence="1">
    <location>
        <position position="155"/>
    </location>
    <ligand>
        <name>a divalent metal cation</name>
        <dbReference type="ChEBI" id="CHEBI:60240"/>
        <label>1</label>
    </ligand>
</feature>
<feature type="binding site" evidence="1">
    <location>
        <position position="156"/>
    </location>
    <ligand>
        <name>a divalent metal cation</name>
        <dbReference type="ChEBI" id="CHEBI:60240"/>
        <label>2</label>
    </ligand>
</feature>
<feature type="binding site" evidence="1">
    <location>
        <begin position="211"/>
        <end position="218"/>
    </location>
    <ligand>
        <name>GTP</name>
        <dbReference type="ChEBI" id="CHEBI:37565"/>
    </ligand>
</feature>
<feature type="binding site" evidence="1">
    <location>
        <position position="213"/>
    </location>
    <ligand>
        <name>a divalent metal cation</name>
        <dbReference type="ChEBI" id="CHEBI:60240"/>
        <label>2</label>
    </ligand>
</feature>
<name>COFE_METM7</name>
<sequence>MITERVKMEVIGLEIPLISGNEDYTLAELISKYPLKDKDIIVIAETVVSKSEKNVILKDTIKPSNEAIELSKKLGKEPEVVQVILDESNETVRLGPNFIVTETKHGFVCANSGVDESNTSKGIKPLPKNPDKSANEIRKGIEEITGKNVGVIINDSMGRPFRKGSCGVAIGVSGVCGLWDRKGEKDLFGRELKTTEVGIADELAATASVVMGQSNEGIPLVIIRNAPVPFNDGTGKELIRKKEEDVFR</sequence>
<evidence type="ECO:0000255" key="1">
    <source>
        <dbReference type="HAMAP-Rule" id="MF_01258"/>
    </source>
</evidence>
<reference key="1">
    <citation type="submission" date="2007-06" db="EMBL/GenBank/DDBJ databases">
        <title>Complete sequence of Methanococcus maripaludis C7.</title>
        <authorList>
            <consortium name="US DOE Joint Genome Institute"/>
            <person name="Copeland A."/>
            <person name="Lucas S."/>
            <person name="Lapidus A."/>
            <person name="Barry K."/>
            <person name="Glavina del Rio T."/>
            <person name="Dalin E."/>
            <person name="Tice H."/>
            <person name="Pitluck S."/>
            <person name="Clum A."/>
            <person name="Schmutz J."/>
            <person name="Larimer F."/>
            <person name="Land M."/>
            <person name="Hauser L."/>
            <person name="Kyrpides N."/>
            <person name="Anderson I."/>
            <person name="Sieprawska-Lupa M."/>
            <person name="Whitman W.B."/>
            <person name="Richardson P."/>
        </authorList>
    </citation>
    <scope>NUCLEOTIDE SEQUENCE [LARGE SCALE GENOMIC DNA]</scope>
    <source>
        <strain>C7 / ATCC BAA-1331</strain>
    </source>
</reference>
<gene>
    <name evidence="1" type="primary">cofE</name>
    <name type="ordered locus">MmarC7_0184</name>
</gene>